<gene>
    <name evidence="1" type="primary">gcvP</name>
    <name type="ordered locus">E2348C_3155</name>
</gene>
<organism>
    <name type="scientific">Escherichia coli O127:H6 (strain E2348/69 / EPEC)</name>
    <dbReference type="NCBI Taxonomy" id="574521"/>
    <lineage>
        <taxon>Bacteria</taxon>
        <taxon>Pseudomonadati</taxon>
        <taxon>Pseudomonadota</taxon>
        <taxon>Gammaproteobacteria</taxon>
        <taxon>Enterobacterales</taxon>
        <taxon>Enterobacteriaceae</taxon>
        <taxon>Escherichia</taxon>
    </lineage>
</organism>
<dbReference type="EC" id="1.4.4.2" evidence="1"/>
<dbReference type="EMBL" id="FM180568">
    <property type="protein sequence ID" value="CAS10703.1"/>
    <property type="molecule type" value="Genomic_DNA"/>
</dbReference>
<dbReference type="RefSeq" id="WP_000195034.1">
    <property type="nucleotide sequence ID" value="NC_011601.1"/>
</dbReference>
<dbReference type="SMR" id="B7UHV1"/>
<dbReference type="KEGG" id="ecg:E2348C_3155"/>
<dbReference type="HOGENOM" id="CLU_004620_1_1_6"/>
<dbReference type="Proteomes" id="UP000008205">
    <property type="component" value="Chromosome"/>
</dbReference>
<dbReference type="GO" id="GO:0005829">
    <property type="term" value="C:cytosol"/>
    <property type="evidence" value="ECO:0007669"/>
    <property type="project" value="TreeGrafter"/>
</dbReference>
<dbReference type="GO" id="GO:0005960">
    <property type="term" value="C:glycine cleavage complex"/>
    <property type="evidence" value="ECO:0007669"/>
    <property type="project" value="TreeGrafter"/>
</dbReference>
<dbReference type="GO" id="GO:0016594">
    <property type="term" value="F:glycine binding"/>
    <property type="evidence" value="ECO:0007669"/>
    <property type="project" value="TreeGrafter"/>
</dbReference>
<dbReference type="GO" id="GO:0004375">
    <property type="term" value="F:glycine dehydrogenase (decarboxylating) activity"/>
    <property type="evidence" value="ECO:0007669"/>
    <property type="project" value="UniProtKB-EC"/>
</dbReference>
<dbReference type="GO" id="GO:0030170">
    <property type="term" value="F:pyridoxal phosphate binding"/>
    <property type="evidence" value="ECO:0007669"/>
    <property type="project" value="TreeGrafter"/>
</dbReference>
<dbReference type="GO" id="GO:0019464">
    <property type="term" value="P:glycine decarboxylation via glycine cleavage system"/>
    <property type="evidence" value="ECO:0007669"/>
    <property type="project" value="UniProtKB-UniRule"/>
</dbReference>
<dbReference type="CDD" id="cd00613">
    <property type="entry name" value="GDC-P"/>
    <property type="match status" value="2"/>
</dbReference>
<dbReference type="FunFam" id="3.40.640.10:FF:000005">
    <property type="entry name" value="Glycine dehydrogenase (decarboxylating), mitochondrial"/>
    <property type="match status" value="1"/>
</dbReference>
<dbReference type="FunFam" id="3.90.1150.10:FF:000007">
    <property type="entry name" value="Glycine dehydrogenase (decarboxylating), mitochondrial"/>
    <property type="match status" value="1"/>
</dbReference>
<dbReference type="FunFam" id="3.40.640.10:FF:000007">
    <property type="entry name" value="glycine dehydrogenase (Decarboxylating), mitochondrial"/>
    <property type="match status" value="1"/>
</dbReference>
<dbReference type="Gene3D" id="3.90.1150.10">
    <property type="entry name" value="Aspartate Aminotransferase, domain 1"/>
    <property type="match status" value="1"/>
</dbReference>
<dbReference type="Gene3D" id="3.40.640.10">
    <property type="entry name" value="Type I PLP-dependent aspartate aminotransferase-like (Major domain)"/>
    <property type="match status" value="2"/>
</dbReference>
<dbReference type="HAMAP" id="MF_00711">
    <property type="entry name" value="GcvP"/>
    <property type="match status" value="1"/>
</dbReference>
<dbReference type="InterPro" id="IPR003437">
    <property type="entry name" value="GcvP"/>
</dbReference>
<dbReference type="InterPro" id="IPR049316">
    <property type="entry name" value="GDC-P_C"/>
</dbReference>
<dbReference type="InterPro" id="IPR049315">
    <property type="entry name" value="GDC-P_N"/>
</dbReference>
<dbReference type="InterPro" id="IPR020581">
    <property type="entry name" value="GDC_P"/>
</dbReference>
<dbReference type="InterPro" id="IPR015424">
    <property type="entry name" value="PyrdxlP-dep_Trfase"/>
</dbReference>
<dbReference type="InterPro" id="IPR015421">
    <property type="entry name" value="PyrdxlP-dep_Trfase_major"/>
</dbReference>
<dbReference type="InterPro" id="IPR015422">
    <property type="entry name" value="PyrdxlP-dep_Trfase_small"/>
</dbReference>
<dbReference type="NCBIfam" id="TIGR00461">
    <property type="entry name" value="gcvP"/>
    <property type="match status" value="1"/>
</dbReference>
<dbReference type="NCBIfam" id="NF003346">
    <property type="entry name" value="PRK04366.1"/>
    <property type="match status" value="1"/>
</dbReference>
<dbReference type="PANTHER" id="PTHR11773:SF13">
    <property type="entry name" value="GLYCINE DEHYDROGENASE (DECARBOXYLATING)"/>
    <property type="match status" value="1"/>
</dbReference>
<dbReference type="PANTHER" id="PTHR11773">
    <property type="entry name" value="GLYCINE DEHYDROGENASE, DECARBOXYLATING"/>
    <property type="match status" value="1"/>
</dbReference>
<dbReference type="Pfam" id="PF21478">
    <property type="entry name" value="GcvP2_C"/>
    <property type="match status" value="1"/>
</dbReference>
<dbReference type="Pfam" id="PF02347">
    <property type="entry name" value="GDC-P"/>
    <property type="match status" value="2"/>
</dbReference>
<dbReference type="SUPFAM" id="SSF53383">
    <property type="entry name" value="PLP-dependent transferases"/>
    <property type="match status" value="2"/>
</dbReference>
<accession>B7UHV1</accession>
<evidence type="ECO:0000255" key="1">
    <source>
        <dbReference type="HAMAP-Rule" id="MF_00711"/>
    </source>
</evidence>
<name>GCSP_ECO27</name>
<comment type="function">
    <text evidence="1">The glycine cleavage system catalyzes the degradation of glycine. The P protein binds the alpha-amino group of glycine through its pyridoxal phosphate cofactor; CO(2) is released and the remaining methylamine moiety is then transferred to the lipoamide cofactor of the H protein.</text>
</comment>
<comment type="catalytic activity">
    <reaction evidence="1">
        <text>N(6)-[(R)-lipoyl]-L-lysyl-[glycine-cleavage complex H protein] + glycine + H(+) = N(6)-[(R)-S(8)-aminomethyldihydrolipoyl]-L-lysyl-[glycine-cleavage complex H protein] + CO2</text>
        <dbReference type="Rhea" id="RHEA:24304"/>
        <dbReference type="Rhea" id="RHEA-COMP:10494"/>
        <dbReference type="Rhea" id="RHEA-COMP:10495"/>
        <dbReference type="ChEBI" id="CHEBI:15378"/>
        <dbReference type="ChEBI" id="CHEBI:16526"/>
        <dbReference type="ChEBI" id="CHEBI:57305"/>
        <dbReference type="ChEBI" id="CHEBI:83099"/>
        <dbReference type="ChEBI" id="CHEBI:83143"/>
        <dbReference type="EC" id="1.4.4.2"/>
    </reaction>
</comment>
<comment type="cofactor">
    <cofactor evidence="1">
        <name>pyridoxal 5'-phosphate</name>
        <dbReference type="ChEBI" id="CHEBI:597326"/>
    </cofactor>
</comment>
<comment type="subunit">
    <text evidence="1">The glycine cleavage system is composed of four proteins: P, T, L and H.</text>
</comment>
<comment type="similarity">
    <text evidence="1">Belongs to the GcvP family.</text>
</comment>
<reference key="1">
    <citation type="journal article" date="2009" name="J. Bacteriol.">
        <title>Complete genome sequence and comparative genome analysis of enteropathogenic Escherichia coli O127:H6 strain E2348/69.</title>
        <authorList>
            <person name="Iguchi A."/>
            <person name="Thomson N.R."/>
            <person name="Ogura Y."/>
            <person name="Saunders D."/>
            <person name="Ooka T."/>
            <person name="Henderson I.R."/>
            <person name="Harris D."/>
            <person name="Asadulghani M."/>
            <person name="Kurokawa K."/>
            <person name="Dean P."/>
            <person name="Kenny B."/>
            <person name="Quail M.A."/>
            <person name="Thurston S."/>
            <person name="Dougan G."/>
            <person name="Hayashi T."/>
            <person name="Parkhill J."/>
            <person name="Frankel G."/>
        </authorList>
    </citation>
    <scope>NUCLEOTIDE SEQUENCE [LARGE SCALE GENOMIC DNA]</scope>
    <source>
        <strain>E2348/69 / EPEC</strain>
    </source>
</reference>
<feature type="chain" id="PRO_1000147963" description="Glycine dehydrogenase (decarboxylating)">
    <location>
        <begin position="1"/>
        <end position="957"/>
    </location>
</feature>
<feature type="modified residue" description="N6-(pyridoxal phosphate)lysine" evidence="1">
    <location>
        <position position="708"/>
    </location>
</feature>
<sequence length="957" mass="104293">MTQTLSQLENSGAFIERHIGPDAAQQQEMLNAVGAQSLNALTGQIVPKDIQLATPPQVGAPATEYAALAELKAIASRNKRFTSYIGMGYTAVQLPPVILRNMLENPGWYTAYTPYQPEVSQGRLEALLNFQQVTLDLTGLDMASASLLDEATAAAEAMAMAKRVSKLKNANRFFVASDVHPQTLDVVRTRAETFGFEVIVDDAQKVLDHQDVFGVLLQQVGTTGEIHDYTALISELKSRKIVVSVAADIMALVLLTAPGKQGADIVFGSAQRFGVPMGYGGPHAAFFAAKDEYKRSMPGRIIGVSKDAAGNTALRMAMQTREQHIRREKANSNICTSQVLLANIASLYAVYHGPVGLKRIANRIHRLTDILAAGLQQKGLKLRHAHYFDTLCVEVADKAGVLARAEAAEINLRSDILNAVGITLDETTTRENVMQLFSVLLGDNHGLDIDTLDKDVAHDSRSIQAAMLRDDEILTHPVFNRYHSETEMMRYMHSLERKDLALNQAMIPLGSCTMKLNAAAEMIPITWPEFAELHPFCPPEQAEGYQQMIAQLADWLVKLTGYDAVCMQPNSGAQGEYAGLLAIRHYHESRNEGHRDICLIPASAHGTNPASAHMAGMQVVVVACDKNGNIDLTDLRAKAEQAGDNLSCIMVTYPSTHGVYEETIREVCEVVHQFGGQVYLDGANMNAQVGITSPGFIGADVSHLNLHKTFCIPHGGGGPGMGPIGVKAHLAPFVPGHSVVQIEGMLTRQGAVSAAPFGSASILPISWMYIRMMGAEGLKKASQVAILNANYIASRLQDAFPVLYTGRDGRVAHECILDIRPLKEETGISELDIAKRLIDYGFHAPTMSFPVAGTLMVEPTESESKVELDRFIDAMLAIRAEIDQVKAGVWPLEDNPLVNAPHIQSELVAEWAHPYSREVAVFPAGVADKYWPTVKRLDDVYGDRNLFCSCVPISEYQ</sequence>
<proteinExistence type="inferred from homology"/>
<protein>
    <recommendedName>
        <fullName evidence="1">Glycine dehydrogenase (decarboxylating)</fullName>
        <ecNumber evidence="1">1.4.4.2</ecNumber>
    </recommendedName>
    <alternativeName>
        <fullName evidence="1">Glycine cleavage system P-protein</fullName>
    </alternativeName>
    <alternativeName>
        <fullName evidence="1">Glycine decarboxylase</fullName>
    </alternativeName>
    <alternativeName>
        <fullName evidence="1">Glycine dehydrogenase (aminomethyl-transferring)</fullName>
    </alternativeName>
</protein>
<keyword id="KW-0560">Oxidoreductase</keyword>
<keyword id="KW-0663">Pyridoxal phosphate</keyword>
<keyword id="KW-1185">Reference proteome</keyword>